<protein>
    <recommendedName>
        <fullName>CASP-like protein 2A1</fullName>
        <shortName>OsCASPL2A1</shortName>
    </recommendedName>
</protein>
<name>CSPLA_ORYSI</name>
<sequence>MSKMAEEKVLAAPATVDGGMQSSGDLQASSAAAARVRPVETLLRAAPLGLCVAAMAIMLRNSVTNEYGTVSYSDLGGFKYLVYANGLCAAYSLASAFYIAVPRPATLSRSWVVFLLDQVFTYLILAAGAASAELLYLAYNGDKEVTWSEACGVFGGFCRQARTSVAITFASVACYILLSLISSYRLFSAYDPPQPSLGNKGVEIAAFPR</sequence>
<organism>
    <name type="scientific">Oryza sativa subsp. indica</name>
    <name type="common">Rice</name>
    <dbReference type="NCBI Taxonomy" id="39946"/>
    <lineage>
        <taxon>Eukaryota</taxon>
        <taxon>Viridiplantae</taxon>
        <taxon>Streptophyta</taxon>
        <taxon>Embryophyta</taxon>
        <taxon>Tracheophyta</taxon>
        <taxon>Spermatophyta</taxon>
        <taxon>Magnoliopsida</taxon>
        <taxon>Liliopsida</taxon>
        <taxon>Poales</taxon>
        <taxon>Poaceae</taxon>
        <taxon>BOP clade</taxon>
        <taxon>Oryzoideae</taxon>
        <taxon>Oryzeae</taxon>
        <taxon>Oryzinae</taxon>
        <taxon>Oryza</taxon>
        <taxon>Oryza sativa</taxon>
    </lineage>
</organism>
<proteinExistence type="inferred from homology"/>
<accession>B8ARW3</accession>
<accession>Q01MG8</accession>
<gene>
    <name type="ORF">OsI_15195</name>
    <name type="ORF">OSIGBa0131F24.1</name>
</gene>
<evidence type="ECO:0000250" key="1"/>
<evidence type="ECO:0000255" key="2"/>
<evidence type="ECO:0000305" key="3"/>
<reference key="1">
    <citation type="journal article" date="2002" name="Nature">
        <title>Sequence and analysis of rice chromosome 4.</title>
        <authorList>
            <person name="Feng Q."/>
            <person name="Zhang Y."/>
            <person name="Hao P."/>
            <person name="Wang S."/>
            <person name="Fu G."/>
            <person name="Huang Y."/>
            <person name="Li Y."/>
            <person name="Zhu J."/>
            <person name="Liu Y."/>
            <person name="Hu X."/>
            <person name="Jia P."/>
            <person name="Zhang Y."/>
            <person name="Zhao Q."/>
            <person name="Ying K."/>
            <person name="Yu S."/>
            <person name="Tang Y."/>
            <person name="Weng Q."/>
            <person name="Zhang L."/>
            <person name="Lu Y."/>
            <person name="Mu J."/>
            <person name="Lu Y."/>
            <person name="Zhang L.S."/>
            <person name="Yu Z."/>
            <person name="Fan D."/>
            <person name="Liu X."/>
            <person name="Lu T."/>
            <person name="Li C."/>
            <person name="Wu Y."/>
            <person name="Sun T."/>
            <person name="Lei H."/>
            <person name="Li T."/>
            <person name="Hu H."/>
            <person name="Guan J."/>
            <person name="Wu M."/>
            <person name="Zhang R."/>
            <person name="Zhou B."/>
            <person name="Chen Z."/>
            <person name="Chen L."/>
            <person name="Jin Z."/>
            <person name="Wang R."/>
            <person name="Yin H."/>
            <person name="Cai Z."/>
            <person name="Ren S."/>
            <person name="Lv G."/>
            <person name="Gu W."/>
            <person name="Zhu G."/>
            <person name="Tu Y."/>
            <person name="Jia J."/>
            <person name="Zhang Y."/>
            <person name="Chen J."/>
            <person name="Kang H."/>
            <person name="Chen X."/>
            <person name="Shao C."/>
            <person name="Sun Y."/>
            <person name="Hu Q."/>
            <person name="Zhang X."/>
            <person name="Zhang W."/>
            <person name="Wang L."/>
            <person name="Ding C."/>
            <person name="Sheng H."/>
            <person name="Gu J."/>
            <person name="Chen S."/>
            <person name="Ni L."/>
            <person name="Zhu F."/>
            <person name="Chen W."/>
            <person name="Lan L."/>
            <person name="Lai Y."/>
            <person name="Cheng Z."/>
            <person name="Gu M."/>
            <person name="Jiang J."/>
            <person name="Li J."/>
            <person name="Hong G."/>
            <person name="Xue Y."/>
            <person name="Han B."/>
        </authorList>
    </citation>
    <scope>NUCLEOTIDE SEQUENCE [LARGE SCALE GENOMIC DNA]</scope>
    <source>
        <strain>cv. Guang-Lu-Ai No.4</strain>
    </source>
</reference>
<reference key="2">
    <citation type="journal article" date="2005" name="PLoS Biol.">
        <title>The genomes of Oryza sativa: a history of duplications.</title>
        <authorList>
            <person name="Yu J."/>
            <person name="Wang J."/>
            <person name="Lin W."/>
            <person name="Li S."/>
            <person name="Li H."/>
            <person name="Zhou J."/>
            <person name="Ni P."/>
            <person name="Dong W."/>
            <person name="Hu S."/>
            <person name="Zeng C."/>
            <person name="Zhang J."/>
            <person name="Zhang Y."/>
            <person name="Li R."/>
            <person name="Xu Z."/>
            <person name="Li S."/>
            <person name="Li X."/>
            <person name="Zheng H."/>
            <person name="Cong L."/>
            <person name="Lin L."/>
            <person name="Yin J."/>
            <person name="Geng J."/>
            <person name="Li G."/>
            <person name="Shi J."/>
            <person name="Liu J."/>
            <person name="Lv H."/>
            <person name="Li J."/>
            <person name="Wang J."/>
            <person name="Deng Y."/>
            <person name="Ran L."/>
            <person name="Shi X."/>
            <person name="Wang X."/>
            <person name="Wu Q."/>
            <person name="Li C."/>
            <person name="Ren X."/>
            <person name="Wang J."/>
            <person name="Wang X."/>
            <person name="Li D."/>
            <person name="Liu D."/>
            <person name="Zhang X."/>
            <person name="Ji Z."/>
            <person name="Zhao W."/>
            <person name="Sun Y."/>
            <person name="Zhang Z."/>
            <person name="Bao J."/>
            <person name="Han Y."/>
            <person name="Dong L."/>
            <person name="Ji J."/>
            <person name="Chen P."/>
            <person name="Wu S."/>
            <person name="Liu J."/>
            <person name="Xiao Y."/>
            <person name="Bu D."/>
            <person name="Tan J."/>
            <person name="Yang L."/>
            <person name="Ye C."/>
            <person name="Zhang J."/>
            <person name="Xu J."/>
            <person name="Zhou Y."/>
            <person name="Yu Y."/>
            <person name="Zhang B."/>
            <person name="Zhuang S."/>
            <person name="Wei H."/>
            <person name="Liu B."/>
            <person name="Lei M."/>
            <person name="Yu H."/>
            <person name="Li Y."/>
            <person name="Xu H."/>
            <person name="Wei S."/>
            <person name="He X."/>
            <person name="Fang L."/>
            <person name="Zhang Z."/>
            <person name="Zhang Y."/>
            <person name="Huang X."/>
            <person name="Su Z."/>
            <person name="Tong W."/>
            <person name="Li J."/>
            <person name="Tong Z."/>
            <person name="Li S."/>
            <person name="Ye J."/>
            <person name="Wang L."/>
            <person name="Fang L."/>
            <person name="Lei T."/>
            <person name="Chen C.-S."/>
            <person name="Chen H.-C."/>
            <person name="Xu Z."/>
            <person name="Li H."/>
            <person name="Huang H."/>
            <person name="Zhang F."/>
            <person name="Xu H."/>
            <person name="Li N."/>
            <person name="Zhao C."/>
            <person name="Li S."/>
            <person name="Dong L."/>
            <person name="Huang Y."/>
            <person name="Li L."/>
            <person name="Xi Y."/>
            <person name="Qi Q."/>
            <person name="Li W."/>
            <person name="Zhang B."/>
            <person name="Hu W."/>
            <person name="Zhang Y."/>
            <person name="Tian X."/>
            <person name="Jiao Y."/>
            <person name="Liang X."/>
            <person name="Jin J."/>
            <person name="Gao L."/>
            <person name="Zheng W."/>
            <person name="Hao B."/>
            <person name="Liu S.-M."/>
            <person name="Wang W."/>
            <person name="Yuan L."/>
            <person name="Cao M."/>
            <person name="McDermott J."/>
            <person name="Samudrala R."/>
            <person name="Wang J."/>
            <person name="Wong G.K.-S."/>
            <person name="Yang H."/>
        </authorList>
    </citation>
    <scope>NUCLEOTIDE SEQUENCE [LARGE SCALE GENOMIC DNA]</scope>
    <source>
        <strain>cv. 93-11</strain>
    </source>
</reference>
<reference key="3">
    <citation type="journal article" date="2014" name="Plant Physiol.">
        <title>Functional and evolutionary analysis of the CASPARIAN STRIP MEMBRANE DOMAIN PROTEIN family.</title>
        <authorList>
            <person name="Roppolo D."/>
            <person name="Boeckmann B."/>
            <person name="Pfister A."/>
            <person name="Boutet E."/>
            <person name="Rubio M.C."/>
            <person name="Denervaud-Tendon V."/>
            <person name="Vermeer J.E."/>
            <person name="Gheyselinck J."/>
            <person name="Xenarios I."/>
            <person name="Geldner N."/>
        </authorList>
    </citation>
    <scope>GENE FAMILY</scope>
    <scope>NOMENCLATURE</scope>
</reference>
<keyword id="KW-1003">Cell membrane</keyword>
<keyword id="KW-0472">Membrane</keyword>
<keyword id="KW-1185">Reference proteome</keyword>
<keyword id="KW-0812">Transmembrane</keyword>
<keyword id="KW-1133">Transmembrane helix</keyword>
<dbReference type="EMBL" id="CR855045">
    <property type="protein sequence ID" value="CAH66047.1"/>
    <property type="status" value="ALT_INIT"/>
    <property type="molecule type" value="Genomic_DNA"/>
</dbReference>
<dbReference type="EMBL" id="CM000129">
    <property type="protein sequence ID" value="EEC76935.1"/>
    <property type="molecule type" value="Genomic_DNA"/>
</dbReference>
<dbReference type="STRING" id="39946.B8ARW3"/>
<dbReference type="EnsemblPlants" id="BGIOSGA016055-TA">
    <property type="protein sequence ID" value="BGIOSGA016055-PA"/>
    <property type="gene ID" value="BGIOSGA016055"/>
</dbReference>
<dbReference type="Gramene" id="BGIOSGA016055-TA">
    <property type="protein sequence ID" value="BGIOSGA016055-PA"/>
    <property type="gene ID" value="BGIOSGA016055"/>
</dbReference>
<dbReference type="HOGENOM" id="CLU_066104_2_2_1"/>
<dbReference type="OMA" id="TWSQACG"/>
<dbReference type="Proteomes" id="UP000007015">
    <property type="component" value="Chromosome 4"/>
</dbReference>
<dbReference type="GO" id="GO:0005886">
    <property type="term" value="C:plasma membrane"/>
    <property type="evidence" value="ECO:0007669"/>
    <property type="project" value="UniProtKB-SubCell"/>
</dbReference>
<dbReference type="InterPro" id="IPR006459">
    <property type="entry name" value="CASP/CASPL"/>
</dbReference>
<dbReference type="InterPro" id="IPR006702">
    <property type="entry name" value="CASP_dom"/>
</dbReference>
<dbReference type="NCBIfam" id="TIGR01569">
    <property type="entry name" value="A_tha_TIGR01569"/>
    <property type="match status" value="1"/>
</dbReference>
<dbReference type="PANTHER" id="PTHR33573:SF46">
    <property type="entry name" value="CASP-LIKE PROTEIN 2A1"/>
    <property type="match status" value="1"/>
</dbReference>
<dbReference type="PANTHER" id="PTHR33573">
    <property type="entry name" value="CASP-LIKE PROTEIN 4A4"/>
    <property type="match status" value="1"/>
</dbReference>
<dbReference type="Pfam" id="PF04535">
    <property type="entry name" value="CASP_dom"/>
    <property type="match status" value="1"/>
</dbReference>
<comment type="subunit">
    <text evidence="1">Homodimer and heterodimers.</text>
</comment>
<comment type="subcellular location">
    <subcellularLocation>
        <location evidence="1">Cell membrane</location>
        <topology evidence="1">Multi-pass membrane protein</topology>
    </subcellularLocation>
</comment>
<comment type="similarity">
    <text evidence="3">Belongs to the Casparian strip membrane proteins (CASP) family.</text>
</comment>
<comment type="sequence caution" evidence="3">
    <conflict type="erroneous initiation">
        <sequence resource="EMBL-CDS" id="CAH66047"/>
    </conflict>
    <text>Truncated N-terminus.</text>
</comment>
<feature type="chain" id="PRO_0000412026" description="CASP-like protein 2A1">
    <location>
        <begin position="1"/>
        <end position="209"/>
    </location>
</feature>
<feature type="topological domain" description="Cytoplasmic" evidence="2">
    <location>
        <begin position="1"/>
        <end position="38"/>
    </location>
</feature>
<feature type="transmembrane region" description="Helical" evidence="2">
    <location>
        <begin position="39"/>
        <end position="59"/>
    </location>
</feature>
<feature type="topological domain" description="Extracellular" evidence="2">
    <location>
        <begin position="60"/>
        <end position="80"/>
    </location>
</feature>
<feature type="transmembrane region" description="Helical" evidence="2">
    <location>
        <begin position="81"/>
        <end position="101"/>
    </location>
</feature>
<feature type="topological domain" description="Cytoplasmic" evidence="2">
    <location>
        <begin position="102"/>
        <end position="109"/>
    </location>
</feature>
<feature type="transmembrane region" description="Helical" evidence="2">
    <location>
        <begin position="110"/>
        <end position="130"/>
    </location>
</feature>
<feature type="topological domain" description="Extracellular" evidence="2">
    <location>
        <begin position="131"/>
        <end position="163"/>
    </location>
</feature>
<feature type="transmembrane region" description="Helical" evidence="2">
    <location>
        <begin position="164"/>
        <end position="184"/>
    </location>
</feature>
<feature type="topological domain" description="Cytoplasmic" evidence="2">
    <location>
        <begin position="185"/>
        <end position="209"/>
    </location>
</feature>